<gene>
    <name type="primary">preA</name>
    <name type="synonym">mob</name>
</gene>
<geneLocation type="plasmid">
    <name>pLB4</name>
</geneLocation>
<sequence length="361" mass="41846">MSFAVARMTKLKADNLVGIGNHDQRKTTNHSNEDIDVSRSHLNYDLVAGRTDNFKTDIEAYINENKASKRAVRKDAVLVNEWIITSDKDFFEQLDEAETRKYFETAKQYFADNYGDENIRYAVVHMDEKTPHMHMGIVPFDDDKKLSAKRIFNREALQHIQEELPQYLKENGFDVQRGNKNKERKNLSVPEYKAMREELKKIETEKQETQAKLADTKKQLDEIKPRDTKKIASKPTLMNKNKVTVDKSDLADLEQRAVTSDAYNFEKIHLEVGNHSLRNDLSEAKGRNYELRKENERLQKLVGTLQGIIRNVDEFLHKKLGINLPEKWLERAGLKEPSKKAPESSQELDRHKSDELGGPHL</sequence>
<feature type="chain" id="PRO_0000068419" description="Plasmid recombination enzyme">
    <location>
        <begin position="1"/>
        <end position="361"/>
    </location>
</feature>
<feature type="region of interest" description="Disordered" evidence="2">
    <location>
        <begin position="331"/>
        <end position="361"/>
    </location>
</feature>
<feature type="binding site" evidence="1">
    <location>
        <position position="44"/>
    </location>
    <ligand>
        <name>DNA</name>
        <dbReference type="ChEBI" id="CHEBI:16991"/>
    </ligand>
</feature>
<feature type="binding site" evidence="1">
    <location>
        <position position="114"/>
    </location>
    <ligand>
        <name>DNA</name>
        <dbReference type="ChEBI" id="CHEBI:16991"/>
    </ligand>
</feature>
<accession>P20046</accession>
<evidence type="ECO:0000255" key="1"/>
<evidence type="ECO:0000256" key="2">
    <source>
        <dbReference type="SAM" id="MobiDB-lite"/>
    </source>
</evidence>
<evidence type="ECO:0000305" key="3"/>
<protein>
    <recommendedName>
        <fullName>Plasmid recombination enzyme</fullName>
    </recommendedName>
    <alternativeName>
        <fullName>Mobilization protein</fullName>
    </alternativeName>
</protein>
<dbReference type="EMBL" id="M33531">
    <property type="protein sequence ID" value="AAA25252.1"/>
    <property type="molecule type" value="Genomic_DNA"/>
</dbReference>
<dbReference type="PIR" id="JQ0179">
    <property type="entry name" value="JQ0179"/>
</dbReference>
<dbReference type="SMR" id="P20046"/>
<dbReference type="GO" id="GO:0003677">
    <property type="term" value="F:DNA binding"/>
    <property type="evidence" value="ECO:0007669"/>
    <property type="project" value="UniProtKB-KW"/>
</dbReference>
<dbReference type="GO" id="GO:0006310">
    <property type="term" value="P:DNA recombination"/>
    <property type="evidence" value="ECO:0007669"/>
    <property type="project" value="InterPro"/>
</dbReference>
<dbReference type="CDD" id="cd17242">
    <property type="entry name" value="MobM_relaxase"/>
    <property type="match status" value="1"/>
</dbReference>
<dbReference type="Gene3D" id="3.30.930.30">
    <property type="match status" value="1"/>
</dbReference>
<dbReference type="InterPro" id="IPR001668">
    <property type="entry name" value="Mob_Pre"/>
</dbReference>
<dbReference type="NCBIfam" id="NF041497">
    <property type="entry name" value="MobV"/>
    <property type="match status" value="1"/>
</dbReference>
<dbReference type="Pfam" id="PF01076">
    <property type="entry name" value="Mob_Pre"/>
    <property type="match status" value="1"/>
</dbReference>
<organism>
    <name type="scientific">Lactiplantibacillus plantarum</name>
    <name type="common">Lactobacillus plantarum</name>
    <dbReference type="NCBI Taxonomy" id="1590"/>
    <lineage>
        <taxon>Bacteria</taxon>
        <taxon>Bacillati</taxon>
        <taxon>Bacillota</taxon>
        <taxon>Bacilli</taxon>
        <taxon>Lactobacillales</taxon>
        <taxon>Lactobacillaceae</taxon>
        <taxon>Lactiplantibacillus</taxon>
    </lineage>
</organism>
<name>PREA_LACPN</name>
<proteinExistence type="inferred from homology"/>
<keyword id="KW-0238">DNA-binding</keyword>
<keyword id="KW-0614">Plasmid</keyword>
<reference key="1">
    <citation type="journal article" date="1989" name="Gene">
        <title>Characterization of a cryptic plasmid from Lactobacillus plantarum.</title>
        <authorList>
            <person name="Bates E.E.M."/>
            <person name="Gilbert H.J."/>
        </authorList>
    </citation>
    <scope>NUCLEOTIDE SEQUENCE [GENOMIC DNA]</scope>
    <source>
        <strain>NCDO 1088</strain>
    </source>
</reference>
<comment type="function">
    <text>The interaction of the RSA site and the pre protein may not only serve a function in plasmid maintenance, but also contribute to the distribution of small antibiotic resistance plasmids among Gram-positive bacteria.</text>
</comment>
<comment type="miscellaneous">
    <text>Contains conserved positively charged amino acids probably involved in the binding of the pre protein to the RSA site.</text>
</comment>
<comment type="similarity">
    <text evidence="3">Belongs to the plasmid mobilization pre family.</text>
</comment>